<accession>A5VIG6</accession>
<evidence type="ECO:0000255" key="1">
    <source>
        <dbReference type="HAMAP-Rule" id="MF_00394"/>
    </source>
</evidence>
<keyword id="KW-0963">Cytoplasm</keyword>
<keyword id="KW-0444">Lipid biosynthesis</keyword>
<keyword id="KW-0443">Lipid metabolism</keyword>
<keyword id="KW-0520">NAD</keyword>
<keyword id="KW-0521">NADP</keyword>
<keyword id="KW-0547">Nucleotide-binding</keyword>
<keyword id="KW-0560">Oxidoreductase</keyword>
<keyword id="KW-0594">Phospholipid biosynthesis</keyword>
<keyword id="KW-1208">Phospholipid metabolism</keyword>
<keyword id="KW-1185">Reference proteome</keyword>
<dbReference type="EC" id="1.1.1.94" evidence="1"/>
<dbReference type="EMBL" id="CP000705">
    <property type="protein sequence ID" value="ABQ82640.1"/>
    <property type="molecule type" value="Genomic_DNA"/>
</dbReference>
<dbReference type="RefSeq" id="WP_003667443.1">
    <property type="nucleotide sequence ID" value="NC_009513.1"/>
</dbReference>
<dbReference type="SMR" id="A5VIG6"/>
<dbReference type="STRING" id="557436.Lreu_0371"/>
<dbReference type="KEGG" id="lre:Lreu_0371"/>
<dbReference type="PATRIC" id="fig|557436.17.peg.411"/>
<dbReference type="eggNOG" id="COG0240">
    <property type="taxonomic scope" value="Bacteria"/>
</dbReference>
<dbReference type="HOGENOM" id="CLU_033449_0_2_9"/>
<dbReference type="UniPathway" id="UPA00940"/>
<dbReference type="Proteomes" id="UP000001991">
    <property type="component" value="Chromosome"/>
</dbReference>
<dbReference type="GO" id="GO:0005829">
    <property type="term" value="C:cytosol"/>
    <property type="evidence" value="ECO:0007669"/>
    <property type="project" value="TreeGrafter"/>
</dbReference>
<dbReference type="GO" id="GO:0047952">
    <property type="term" value="F:glycerol-3-phosphate dehydrogenase [NAD(P)+] activity"/>
    <property type="evidence" value="ECO:0007669"/>
    <property type="project" value="UniProtKB-UniRule"/>
</dbReference>
<dbReference type="GO" id="GO:0051287">
    <property type="term" value="F:NAD binding"/>
    <property type="evidence" value="ECO:0007669"/>
    <property type="project" value="InterPro"/>
</dbReference>
<dbReference type="GO" id="GO:0005975">
    <property type="term" value="P:carbohydrate metabolic process"/>
    <property type="evidence" value="ECO:0007669"/>
    <property type="project" value="InterPro"/>
</dbReference>
<dbReference type="GO" id="GO:0046167">
    <property type="term" value="P:glycerol-3-phosphate biosynthetic process"/>
    <property type="evidence" value="ECO:0007669"/>
    <property type="project" value="UniProtKB-UniRule"/>
</dbReference>
<dbReference type="GO" id="GO:0046168">
    <property type="term" value="P:glycerol-3-phosphate catabolic process"/>
    <property type="evidence" value="ECO:0007669"/>
    <property type="project" value="InterPro"/>
</dbReference>
<dbReference type="GO" id="GO:0006650">
    <property type="term" value="P:glycerophospholipid metabolic process"/>
    <property type="evidence" value="ECO:0007669"/>
    <property type="project" value="UniProtKB-UniRule"/>
</dbReference>
<dbReference type="GO" id="GO:0008654">
    <property type="term" value="P:phospholipid biosynthetic process"/>
    <property type="evidence" value="ECO:0007669"/>
    <property type="project" value="UniProtKB-KW"/>
</dbReference>
<dbReference type="FunFam" id="1.10.1040.10:FF:000001">
    <property type="entry name" value="Glycerol-3-phosphate dehydrogenase [NAD(P)+]"/>
    <property type="match status" value="1"/>
</dbReference>
<dbReference type="FunFam" id="3.40.50.720:FF:000019">
    <property type="entry name" value="Glycerol-3-phosphate dehydrogenase [NAD(P)+]"/>
    <property type="match status" value="1"/>
</dbReference>
<dbReference type="Gene3D" id="1.10.1040.10">
    <property type="entry name" value="N-(1-d-carboxylethyl)-l-norvaline Dehydrogenase, domain 2"/>
    <property type="match status" value="1"/>
</dbReference>
<dbReference type="Gene3D" id="3.40.50.720">
    <property type="entry name" value="NAD(P)-binding Rossmann-like Domain"/>
    <property type="match status" value="1"/>
</dbReference>
<dbReference type="HAMAP" id="MF_00394">
    <property type="entry name" value="NAD_Glyc3P_dehydrog"/>
    <property type="match status" value="1"/>
</dbReference>
<dbReference type="InterPro" id="IPR008927">
    <property type="entry name" value="6-PGluconate_DH-like_C_sf"/>
</dbReference>
<dbReference type="InterPro" id="IPR013328">
    <property type="entry name" value="6PGD_dom2"/>
</dbReference>
<dbReference type="InterPro" id="IPR006168">
    <property type="entry name" value="G3P_DH_NAD-dep"/>
</dbReference>
<dbReference type="InterPro" id="IPR006109">
    <property type="entry name" value="G3P_DH_NAD-dep_C"/>
</dbReference>
<dbReference type="InterPro" id="IPR011128">
    <property type="entry name" value="G3P_DH_NAD-dep_N"/>
</dbReference>
<dbReference type="InterPro" id="IPR036291">
    <property type="entry name" value="NAD(P)-bd_dom_sf"/>
</dbReference>
<dbReference type="NCBIfam" id="NF000940">
    <property type="entry name" value="PRK00094.1-2"/>
    <property type="match status" value="1"/>
</dbReference>
<dbReference type="NCBIfam" id="NF000941">
    <property type="entry name" value="PRK00094.1-3"/>
    <property type="match status" value="1"/>
</dbReference>
<dbReference type="NCBIfam" id="NF000942">
    <property type="entry name" value="PRK00094.1-4"/>
    <property type="match status" value="1"/>
</dbReference>
<dbReference type="PANTHER" id="PTHR11728">
    <property type="entry name" value="GLYCEROL-3-PHOSPHATE DEHYDROGENASE"/>
    <property type="match status" value="1"/>
</dbReference>
<dbReference type="PANTHER" id="PTHR11728:SF1">
    <property type="entry name" value="GLYCEROL-3-PHOSPHATE DEHYDROGENASE [NAD(+)] 2, CHLOROPLASTIC"/>
    <property type="match status" value="1"/>
</dbReference>
<dbReference type="Pfam" id="PF07479">
    <property type="entry name" value="NAD_Gly3P_dh_C"/>
    <property type="match status" value="1"/>
</dbReference>
<dbReference type="Pfam" id="PF01210">
    <property type="entry name" value="NAD_Gly3P_dh_N"/>
    <property type="match status" value="1"/>
</dbReference>
<dbReference type="PIRSF" id="PIRSF000114">
    <property type="entry name" value="Glycerol-3-P_dh"/>
    <property type="match status" value="1"/>
</dbReference>
<dbReference type="PRINTS" id="PR00077">
    <property type="entry name" value="GPDHDRGNASE"/>
</dbReference>
<dbReference type="SUPFAM" id="SSF48179">
    <property type="entry name" value="6-phosphogluconate dehydrogenase C-terminal domain-like"/>
    <property type="match status" value="1"/>
</dbReference>
<dbReference type="SUPFAM" id="SSF51735">
    <property type="entry name" value="NAD(P)-binding Rossmann-fold domains"/>
    <property type="match status" value="1"/>
</dbReference>
<sequence>MAEKIAVLGAGSWGSVLANMLTENGHDVTLWSRNEEQVKQLNTEHTNPRYMKDFVYSTNLTATTDMKKAVKGASVVLIVIPTKGLREVAKQLNAILTELHQKPLVIHATKGLEQNTYKRPSEMLSEDISPENRQAIVVLSGPSHAEDVAIKDMTAVTAACEDLASAKKAQKLFSNSYFRVYTNDDVIGAEFGAALKNIIAIGAGAIQGLGYHDNARAALITRGLAEIRRLGVAFGANPMTFIGLSGVGDLVVTATSKNSRNWRAGYQLGQGKKLQDVIDNMGMVIEGVYTTKAAYELSRKRQVQMPITEALYRVLYEGEDIKTAISQLMDRDLTSENE</sequence>
<gene>
    <name evidence="1" type="primary">gpsA</name>
    <name type="ordered locus">Lreu_0371</name>
</gene>
<proteinExistence type="inferred from homology"/>
<comment type="function">
    <text evidence="1">Catalyzes the reduction of the glycolytic intermediate dihydroxyacetone phosphate (DHAP) to sn-glycerol 3-phosphate (G3P), the key precursor for phospholipid synthesis.</text>
</comment>
<comment type="catalytic activity">
    <reaction evidence="1">
        <text>sn-glycerol 3-phosphate + NAD(+) = dihydroxyacetone phosphate + NADH + H(+)</text>
        <dbReference type="Rhea" id="RHEA:11092"/>
        <dbReference type="ChEBI" id="CHEBI:15378"/>
        <dbReference type="ChEBI" id="CHEBI:57540"/>
        <dbReference type="ChEBI" id="CHEBI:57597"/>
        <dbReference type="ChEBI" id="CHEBI:57642"/>
        <dbReference type="ChEBI" id="CHEBI:57945"/>
        <dbReference type="EC" id="1.1.1.94"/>
    </reaction>
    <physiologicalReaction direction="right-to-left" evidence="1">
        <dbReference type="Rhea" id="RHEA:11094"/>
    </physiologicalReaction>
</comment>
<comment type="catalytic activity">
    <reaction evidence="1">
        <text>sn-glycerol 3-phosphate + NADP(+) = dihydroxyacetone phosphate + NADPH + H(+)</text>
        <dbReference type="Rhea" id="RHEA:11096"/>
        <dbReference type="ChEBI" id="CHEBI:15378"/>
        <dbReference type="ChEBI" id="CHEBI:57597"/>
        <dbReference type="ChEBI" id="CHEBI:57642"/>
        <dbReference type="ChEBI" id="CHEBI:57783"/>
        <dbReference type="ChEBI" id="CHEBI:58349"/>
        <dbReference type="EC" id="1.1.1.94"/>
    </reaction>
    <physiologicalReaction direction="right-to-left" evidence="1">
        <dbReference type="Rhea" id="RHEA:11098"/>
    </physiologicalReaction>
</comment>
<comment type="pathway">
    <text evidence="1">Membrane lipid metabolism; glycerophospholipid metabolism.</text>
</comment>
<comment type="subcellular location">
    <subcellularLocation>
        <location evidence="1">Cytoplasm</location>
    </subcellularLocation>
</comment>
<comment type="similarity">
    <text evidence="1">Belongs to the NAD-dependent glycerol-3-phosphate dehydrogenase family.</text>
</comment>
<name>GPDA_LIMRD</name>
<protein>
    <recommendedName>
        <fullName evidence="1">Glycerol-3-phosphate dehydrogenase [NAD(P)+]</fullName>
        <ecNumber evidence="1">1.1.1.94</ecNumber>
    </recommendedName>
    <alternativeName>
        <fullName evidence="1">NAD(P)(+)-dependent glycerol-3-phosphate dehydrogenase</fullName>
    </alternativeName>
    <alternativeName>
        <fullName evidence="1">NAD(P)H-dependent dihydroxyacetone-phosphate reductase</fullName>
    </alternativeName>
</protein>
<feature type="chain" id="PRO_1000060786" description="Glycerol-3-phosphate dehydrogenase [NAD(P)+]">
    <location>
        <begin position="1"/>
        <end position="338"/>
    </location>
</feature>
<feature type="active site" description="Proton acceptor" evidence="1">
    <location>
        <position position="196"/>
    </location>
</feature>
<feature type="binding site" evidence="1">
    <location>
        <position position="12"/>
    </location>
    <ligand>
        <name>NADPH</name>
        <dbReference type="ChEBI" id="CHEBI:57783"/>
    </ligand>
</feature>
<feature type="binding site" evidence="1">
    <location>
        <position position="13"/>
    </location>
    <ligand>
        <name>NADPH</name>
        <dbReference type="ChEBI" id="CHEBI:57783"/>
    </ligand>
</feature>
<feature type="binding site" evidence="1">
    <location>
        <position position="33"/>
    </location>
    <ligand>
        <name>NADPH</name>
        <dbReference type="ChEBI" id="CHEBI:57783"/>
    </ligand>
</feature>
<feature type="binding site" evidence="1">
    <location>
        <position position="110"/>
    </location>
    <ligand>
        <name>NADPH</name>
        <dbReference type="ChEBI" id="CHEBI:57783"/>
    </ligand>
</feature>
<feature type="binding site" evidence="1">
    <location>
        <position position="110"/>
    </location>
    <ligand>
        <name>sn-glycerol 3-phosphate</name>
        <dbReference type="ChEBI" id="CHEBI:57597"/>
    </ligand>
</feature>
<feature type="binding site" evidence="1">
    <location>
        <position position="141"/>
    </location>
    <ligand>
        <name>sn-glycerol 3-phosphate</name>
        <dbReference type="ChEBI" id="CHEBI:57597"/>
    </ligand>
</feature>
<feature type="binding site" evidence="1">
    <location>
        <position position="143"/>
    </location>
    <ligand>
        <name>sn-glycerol 3-phosphate</name>
        <dbReference type="ChEBI" id="CHEBI:57597"/>
    </ligand>
</feature>
<feature type="binding site" evidence="1">
    <location>
        <position position="145"/>
    </location>
    <ligand>
        <name>NADPH</name>
        <dbReference type="ChEBI" id="CHEBI:57783"/>
    </ligand>
</feature>
<feature type="binding site" evidence="1">
    <location>
        <position position="196"/>
    </location>
    <ligand>
        <name>sn-glycerol 3-phosphate</name>
        <dbReference type="ChEBI" id="CHEBI:57597"/>
    </ligand>
</feature>
<feature type="binding site" evidence="1">
    <location>
        <position position="249"/>
    </location>
    <ligand>
        <name>sn-glycerol 3-phosphate</name>
        <dbReference type="ChEBI" id="CHEBI:57597"/>
    </ligand>
</feature>
<feature type="binding site" evidence="1">
    <location>
        <position position="259"/>
    </location>
    <ligand>
        <name>sn-glycerol 3-phosphate</name>
        <dbReference type="ChEBI" id="CHEBI:57597"/>
    </ligand>
</feature>
<feature type="binding site" evidence="1">
    <location>
        <position position="260"/>
    </location>
    <ligand>
        <name>NADPH</name>
        <dbReference type="ChEBI" id="CHEBI:57783"/>
    </ligand>
</feature>
<feature type="binding site" evidence="1">
    <location>
        <position position="260"/>
    </location>
    <ligand>
        <name>sn-glycerol 3-phosphate</name>
        <dbReference type="ChEBI" id="CHEBI:57597"/>
    </ligand>
</feature>
<feature type="binding site" evidence="1">
    <location>
        <position position="261"/>
    </location>
    <ligand>
        <name>sn-glycerol 3-phosphate</name>
        <dbReference type="ChEBI" id="CHEBI:57597"/>
    </ligand>
</feature>
<feature type="binding site" evidence="1">
    <location>
        <position position="284"/>
    </location>
    <ligand>
        <name>NADPH</name>
        <dbReference type="ChEBI" id="CHEBI:57783"/>
    </ligand>
</feature>
<feature type="binding site" evidence="1">
    <location>
        <position position="286"/>
    </location>
    <ligand>
        <name>NADPH</name>
        <dbReference type="ChEBI" id="CHEBI:57783"/>
    </ligand>
</feature>
<reference key="1">
    <citation type="journal article" date="2011" name="PLoS Genet.">
        <title>The evolution of host specialization in the vertebrate gut symbiont Lactobacillus reuteri.</title>
        <authorList>
            <person name="Frese S.A."/>
            <person name="Benson A.K."/>
            <person name="Tannock G.W."/>
            <person name="Loach D.M."/>
            <person name="Kim J."/>
            <person name="Zhang M."/>
            <person name="Oh P.L."/>
            <person name="Heng N.C."/>
            <person name="Patil P.B."/>
            <person name="Juge N."/>
            <person name="Mackenzie D.A."/>
            <person name="Pearson B.M."/>
            <person name="Lapidus A."/>
            <person name="Dalin E."/>
            <person name="Tice H."/>
            <person name="Goltsman E."/>
            <person name="Land M."/>
            <person name="Hauser L."/>
            <person name="Ivanova N."/>
            <person name="Kyrpides N.C."/>
            <person name="Walter J."/>
        </authorList>
    </citation>
    <scope>NUCLEOTIDE SEQUENCE [LARGE SCALE GENOMIC DNA]</scope>
    <source>
        <strain>DSM 20016</strain>
    </source>
</reference>
<organism>
    <name type="scientific">Limosilactobacillus reuteri (strain DSM 20016)</name>
    <name type="common">Lactobacillus reuteri</name>
    <dbReference type="NCBI Taxonomy" id="557436"/>
    <lineage>
        <taxon>Bacteria</taxon>
        <taxon>Bacillati</taxon>
        <taxon>Bacillota</taxon>
        <taxon>Bacilli</taxon>
        <taxon>Lactobacillales</taxon>
        <taxon>Lactobacillaceae</taxon>
        <taxon>Limosilactobacillus</taxon>
    </lineage>
</organism>